<protein>
    <recommendedName>
        <fullName evidence="1">Dihydroxy-acid dehydratase</fullName>
        <shortName evidence="1">DAD</shortName>
        <ecNumber evidence="1">4.2.1.9</ecNumber>
    </recommendedName>
</protein>
<gene>
    <name evidence="1" type="primary">ilvD</name>
    <name type="ordered locus">PputGB1_5178</name>
</gene>
<dbReference type="EC" id="4.2.1.9" evidence="1"/>
<dbReference type="EMBL" id="CP000926">
    <property type="protein sequence ID" value="ABZ01063.1"/>
    <property type="molecule type" value="Genomic_DNA"/>
</dbReference>
<dbReference type="RefSeq" id="WP_012274676.1">
    <property type="nucleotide sequence ID" value="NC_010322.1"/>
</dbReference>
<dbReference type="SMR" id="B0KN82"/>
<dbReference type="KEGG" id="ppg:PputGB1_5178"/>
<dbReference type="eggNOG" id="COG0129">
    <property type="taxonomic scope" value="Bacteria"/>
</dbReference>
<dbReference type="HOGENOM" id="CLU_014271_4_2_6"/>
<dbReference type="UniPathway" id="UPA00047">
    <property type="reaction ID" value="UER00057"/>
</dbReference>
<dbReference type="UniPathway" id="UPA00049">
    <property type="reaction ID" value="UER00061"/>
</dbReference>
<dbReference type="Proteomes" id="UP000002157">
    <property type="component" value="Chromosome"/>
</dbReference>
<dbReference type="GO" id="GO:0005829">
    <property type="term" value="C:cytosol"/>
    <property type="evidence" value="ECO:0007669"/>
    <property type="project" value="TreeGrafter"/>
</dbReference>
<dbReference type="GO" id="GO:0051537">
    <property type="term" value="F:2 iron, 2 sulfur cluster binding"/>
    <property type="evidence" value="ECO:0007669"/>
    <property type="project" value="UniProtKB-UniRule"/>
</dbReference>
<dbReference type="GO" id="GO:0004160">
    <property type="term" value="F:dihydroxy-acid dehydratase activity"/>
    <property type="evidence" value="ECO:0007669"/>
    <property type="project" value="UniProtKB-UniRule"/>
</dbReference>
<dbReference type="GO" id="GO:0000287">
    <property type="term" value="F:magnesium ion binding"/>
    <property type="evidence" value="ECO:0007669"/>
    <property type="project" value="UniProtKB-UniRule"/>
</dbReference>
<dbReference type="GO" id="GO:0009097">
    <property type="term" value="P:isoleucine biosynthetic process"/>
    <property type="evidence" value="ECO:0007669"/>
    <property type="project" value="UniProtKB-UniRule"/>
</dbReference>
<dbReference type="GO" id="GO:0009099">
    <property type="term" value="P:L-valine biosynthetic process"/>
    <property type="evidence" value="ECO:0007669"/>
    <property type="project" value="UniProtKB-UniRule"/>
</dbReference>
<dbReference type="FunFam" id="3.50.30.80:FF:000001">
    <property type="entry name" value="Dihydroxy-acid dehydratase"/>
    <property type="match status" value="1"/>
</dbReference>
<dbReference type="Gene3D" id="3.50.30.80">
    <property type="entry name" value="IlvD/EDD C-terminal domain-like"/>
    <property type="match status" value="1"/>
</dbReference>
<dbReference type="HAMAP" id="MF_00012">
    <property type="entry name" value="IlvD"/>
    <property type="match status" value="1"/>
</dbReference>
<dbReference type="InterPro" id="IPR042096">
    <property type="entry name" value="Dihydro-acid_dehy_C"/>
</dbReference>
<dbReference type="InterPro" id="IPR004404">
    <property type="entry name" value="DihydroxyA_deHydtase"/>
</dbReference>
<dbReference type="InterPro" id="IPR020558">
    <property type="entry name" value="DiOHA_6PGluconate_deHydtase_CS"/>
</dbReference>
<dbReference type="InterPro" id="IPR056740">
    <property type="entry name" value="ILV_EDD_C"/>
</dbReference>
<dbReference type="InterPro" id="IPR000581">
    <property type="entry name" value="ILV_EDD_N"/>
</dbReference>
<dbReference type="InterPro" id="IPR037237">
    <property type="entry name" value="IlvD/EDD_N"/>
</dbReference>
<dbReference type="NCBIfam" id="TIGR00110">
    <property type="entry name" value="ilvD"/>
    <property type="match status" value="1"/>
</dbReference>
<dbReference type="NCBIfam" id="NF009103">
    <property type="entry name" value="PRK12448.1"/>
    <property type="match status" value="1"/>
</dbReference>
<dbReference type="PANTHER" id="PTHR43661">
    <property type="entry name" value="D-XYLONATE DEHYDRATASE"/>
    <property type="match status" value="1"/>
</dbReference>
<dbReference type="PANTHER" id="PTHR43661:SF3">
    <property type="entry name" value="D-XYLONATE DEHYDRATASE YAGF-RELATED"/>
    <property type="match status" value="1"/>
</dbReference>
<dbReference type="Pfam" id="PF24877">
    <property type="entry name" value="ILV_EDD_C"/>
    <property type="match status" value="1"/>
</dbReference>
<dbReference type="Pfam" id="PF00920">
    <property type="entry name" value="ILVD_EDD_N"/>
    <property type="match status" value="1"/>
</dbReference>
<dbReference type="SUPFAM" id="SSF143975">
    <property type="entry name" value="IlvD/EDD N-terminal domain-like"/>
    <property type="match status" value="1"/>
</dbReference>
<dbReference type="SUPFAM" id="SSF52016">
    <property type="entry name" value="LeuD/IlvD-like"/>
    <property type="match status" value="1"/>
</dbReference>
<dbReference type="PROSITE" id="PS00886">
    <property type="entry name" value="ILVD_EDD_1"/>
    <property type="match status" value="1"/>
</dbReference>
<dbReference type="PROSITE" id="PS00887">
    <property type="entry name" value="ILVD_EDD_2"/>
    <property type="match status" value="1"/>
</dbReference>
<feature type="chain" id="PRO_1000073983" description="Dihydroxy-acid dehydratase">
    <location>
        <begin position="1"/>
        <end position="613"/>
    </location>
</feature>
<feature type="active site" description="Proton acceptor" evidence="1">
    <location>
        <position position="515"/>
    </location>
</feature>
<feature type="binding site" evidence="1">
    <location>
        <position position="81"/>
    </location>
    <ligand>
        <name>Mg(2+)</name>
        <dbReference type="ChEBI" id="CHEBI:18420"/>
    </ligand>
</feature>
<feature type="binding site" evidence="1">
    <location>
        <position position="122"/>
    </location>
    <ligand>
        <name>[2Fe-2S] cluster</name>
        <dbReference type="ChEBI" id="CHEBI:190135"/>
    </ligand>
</feature>
<feature type="binding site" evidence="1">
    <location>
        <position position="123"/>
    </location>
    <ligand>
        <name>Mg(2+)</name>
        <dbReference type="ChEBI" id="CHEBI:18420"/>
    </ligand>
</feature>
<feature type="binding site" description="via carbamate group" evidence="1">
    <location>
        <position position="124"/>
    </location>
    <ligand>
        <name>Mg(2+)</name>
        <dbReference type="ChEBI" id="CHEBI:18420"/>
    </ligand>
</feature>
<feature type="binding site" evidence="1">
    <location>
        <position position="193"/>
    </location>
    <ligand>
        <name>[2Fe-2S] cluster</name>
        <dbReference type="ChEBI" id="CHEBI:190135"/>
    </ligand>
</feature>
<feature type="binding site" evidence="1">
    <location>
        <position position="489"/>
    </location>
    <ligand>
        <name>Mg(2+)</name>
        <dbReference type="ChEBI" id="CHEBI:18420"/>
    </ligand>
</feature>
<feature type="modified residue" description="N6-carboxylysine" evidence="1">
    <location>
        <position position="124"/>
    </location>
</feature>
<name>ILVD_PSEPG</name>
<comment type="function">
    <text evidence="1">Functions in the biosynthesis of branched-chain amino acids. Catalyzes the dehydration of (2R,3R)-2,3-dihydroxy-3-methylpentanoate (2,3-dihydroxy-3-methylvalerate) into 2-oxo-3-methylpentanoate (2-oxo-3-methylvalerate) and of (2R)-2,3-dihydroxy-3-methylbutanoate (2,3-dihydroxyisovalerate) into 2-oxo-3-methylbutanoate (2-oxoisovalerate), the penultimate precursor to L-isoleucine and L-valine, respectively.</text>
</comment>
<comment type="catalytic activity">
    <reaction evidence="1">
        <text>(2R)-2,3-dihydroxy-3-methylbutanoate = 3-methyl-2-oxobutanoate + H2O</text>
        <dbReference type="Rhea" id="RHEA:24809"/>
        <dbReference type="ChEBI" id="CHEBI:11851"/>
        <dbReference type="ChEBI" id="CHEBI:15377"/>
        <dbReference type="ChEBI" id="CHEBI:49072"/>
        <dbReference type="EC" id="4.2.1.9"/>
    </reaction>
    <physiologicalReaction direction="left-to-right" evidence="1">
        <dbReference type="Rhea" id="RHEA:24810"/>
    </physiologicalReaction>
</comment>
<comment type="catalytic activity">
    <reaction evidence="1">
        <text>(2R,3R)-2,3-dihydroxy-3-methylpentanoate = (S)-3-methyl-2-oxopentanoate + H2O</text>
        <dbReference type="Rhea" id="RHEA:27694"/>
        <dbReference type="ChEBI" id="CHEBI:15377"/>
        <dbReference type="ChEBI" id="CHEBI:35146"/>
        <dbReference type="ChEBI" id="CHEBI:49258"/>
        <dbReference type="EC" id="4.2.1.9"/>
    </reaction>
    <physiologicalReaction direction="left-to-right" evidence="1">
        <dbReference type="Rhea" id="RHEA:27695"/>
    </physiologicalReaction>
</comment>
<comment type="cofactor">
    <cofactor evidence="1">
        <name>[2Fe-2S] cluster</name>
        <dbReference type="ChEBI" id="CHEBI:190135"/>
    </cofactor>
    <text evidence="1">Binds 1 [2Fe-2S] cluster per subunit. This cluster acts as a Lewis acid cofactor.</text>
</comment>
<comment type="cofactor">
    <cofactor evidence="1">
        <name>Mg(2+)</name>
        <dbReference type="ChEBI" id="CHEBI:18420"/>
    </cofactor>
</comment>
<comment type="pathway">
    <text evidence="1">Amino-acid biosynthesis; L-isoleucine biosynthesis; L-isoleucine from 2-oxobutanoate: step 3/4.</text>
</comment>
<comment type="pathway">
    <text evidence="1">Amino-acid biosynthesis; L-valine biosynthesis; L-valine from pyruvate: step 3/4.</text>
</comment>
<comment type="subunit">
    <text evidence="1">Homodimer.</text>
</comment>
<comment type="similarity">
    <text evidence="1">Belongs to the IlvD/Edd family.</text>
</comment>
<evidence type="ECO:0000255" key="1">
    <source>
        <dbReference type="HAMAP-Rule" id="MF_00012"/>
    </source>
</evidence>
<organism>
    <name type="scientific">Pseudomonas putida (strain GB-1)</name>
    <dbReference type="NCBI Taxonomy" id="76869"/>
    <lineage>
        <taxon>Bacteria</taxon>
        <taxon>Pseudomonadati</taxon>
        <taxon>Pseudomonadota</taxon>
        <taxon>Gammaproteobacteria</taxon>
        <taxon>Pseudomonadales</taxon>
        <taxon>Pseudomonadaceae</taxon>
        <taxon>Pseudomonas</taxon>
    </lineage>
</organism>
<reference key="1">
    <citation type="submission" date="2008-01" db="EMBL/GenBank/DDBJ databases">
        <title>Complete sequence of Pseudomonas putida GB-1.</title>
        <authorList>
            <consortium name="US DOE Joint Genome Institute"/>
            <person name="Copeland A."/>
            <person name="Lucas S."/>
            <person name="Lapidus A."/>
            <person name="Barry K."/>
            <person name="Glavina del Rio T."/>
            <person name="Dalin E."/>
            <person name="Tice H."/>
            <person name="Pitluck S."/>
            <person name="Bruce D."/>
            <person name="Goodwin L."/>
            <person name="Chertkov O."/>
            <person name="Brettin T."/>
            <person name="Detter J.C."/>
            <person name="Han C."/>
            <person name="Kuske C.R."/>
            <person name="Schmutz J."/>
            <person name="Larimer F."/>
            <person name="Land M."/>
            <person name="Hauser L."/>
            <person name="Kyrpides N."/>
            <person name="Kim E."/>
            <person name="McCarthy J.K."/>
            <person name="Richardson P."/>
        </authorList>
    </citation>
    <scope>NUCLEOTIDE SEQUENCE [LARGE SCALE GENOMIC DNA]</scope>
    <source>
        <strain>GB-1</strain>
    </source>
</reference>
<keyword id="KW-0001">2Fe-2S</keyword>
<keyword id="KW-0028">Amino-acid biosynthesis</keyword>
<keyword id="KW-0100">Branched-chain amino acid biosynthesis</keyword>
<keyword id="KW-0408">Iron</keyword>
<keyword id="KW-0411">Iron-sulfur</keyword>
<keyword id="KW-0456">Lyase</keyword>
<keyword id="KW-0460">Magnesium</keyword>
<keyword id="KW-0479">Metal-binding</keyword>
<sequence length="613" mass="65714">MPDYRSKTSTQGRNMAGARALWRATGMKDEDFKKPIIAIANSFTQFVPGHVHLKDLGQLVAREIERAGGVAKEFNTIAVDDGIAMGHDGMLYSLPSREIIADAVEYMVNAHCADAIVCISNCDKITPGMLMAALRLNIPVIFVSGGPMEAGKTKLASHGLDLVDAMVIAADSSASDEKVAEYERSACPTCGSCSGMFTANSMNCLTEALGLALPGNGSTLATHADREQLFLTAGRTIVELCKRYYGENDESVLPRSIANFKAFENAMMLDIAMGGSTNTILHLLAAAQEGEVEFDLRDIDRLSRKVPQLCKVAPNIQKYHMEDVHRAGGIFSILGSLARGGLLHTDLPTVHSRSMEEAIAKWDITQTDDEAVHTFFKAGPAGIPTQTAFSQSTRWETLDDDRENGCIRSFEHAYSQEGGLAVLYGNIALDGCVVKTAGVDESIHVFEGNAKIFESQDSAVRGILADEVKAGDIVIIRYEGPKGGPGMQEMLYPTSYLKSKGLGKACALLTDGRFSGGTSGLSIGHASPEAAAGGAIGLVRDGDKVLIDIPNRSINLLVSDEELAERRVEQDKKGWKPAEVRPRKVTTALKAYALLATSADKGAVRNKAMLEGL</sequence>
<proteinExistence type="inferred from homology"/>
<accession>B0KN82</accession>